<keyword id="KW-0067">ATP-binding</keyword>
<keyword id="KW-0963">Cytoplasm</keyword>
<keyword id="KW-0436">Ligase</keyword>
<keyword id="KW-0547">Nucleotide-binding</keyword>
<keyword id="KW-0658">Purine biosynthesis</keyword>
<keyword id="KW-1185">Reference proteome</keyword>
<comment type="catalytic activity">
    <reaction evidence="1">
        <text>2-formamido-N(1)-(5-O-phospho-beta-D-ribosyl)acetamidine + ATP = 5-amino-1-(5-phospho-beta-D-ribosyl)imidazole + ADP + phosphate + H(+)</text>
        <dbReference type="Rhea" id="RHEA:23032"/>
        <dbReference type="ChEBI" id="CHEBI:15378"/>
        <dbReference type="ChEBI" id="CHEBI:30616"/>
        <dbReference type="ChEBI" id="CHEBI:43474"/>
        <dbReference type="ChEBI" id="CHEBI:137981"/>
        <dbReference type="ChEBI" id="CHEBI:147287"/>
        <dbReference type="ChEBI" id="CHEBI:456216"/>
        <dbReference type="EC" id="6.3.3.1"/>
    </reaction>
</comment>
<comment type="pathway">
    <text evidence="1">Purine metabolism; IMP biosynthesis via de novo pathway; 5-amino-1-(5-phospho-D-ribosyl)imidazole from N(2)-formyl-N(1)-(5-phospho-D-ribosyl)glycinamide: step 2/2.</text>
</comment>
<comment type="subcellular location">
    <subcellularLocation>
        <location evidence="1">Cytoplasm</location>
    </subcellularLocation>
</comment>
<comment type="similarity">
    <text evidence="1">Belongs to the AIR synthase family.</text>
</comment>
<protein>
    <recommendedName>
        <fullName evidence="1">Phosphoribosylformylglycinamidine cyclo-ligase</fullName>
        <ecNumber evidence="1">6.3.3.1</ecNumber>
    </recommendedName>
    <alternativeName>
        <fullName evidence="1">AIR synthase</fullName>
    </alternativeName>
    <alternativeName>
        <fullName evidence="1">AIRS</fullName>
    </alternativeName>
    <alternativeName>
        <fullName evidence="1">Phosphoribosyl-aminoimidazole synthetase</fullName>
    </alternativeName>
</protein>
<dbReference type="EC" id="6.3.3.1" evidence="1"/>
<dbReference type="EMBL" id="AL646052">
    <property type="protein sequence ID" value="CAD16330.1"/>
    <property type="molecule type" value="Genomic_DNA"/>
</dbReference>
<dbReference type="RefSeq" id="WP_011002533.1">
    <property type="nucleotide sequence ID" value="NC_003295.1"/>
</dbReference>
<dbReference type="SMR" id="Q8XW52"/>
<dbReference type="STRING" id="267608.RSc2623"/>
<dbReference type="EnsemblBacteria" id="CAD16330">
    <property type="protein sequence ID" value="CAD16330"/>
    <property type="gene ID" value="RSc2623"/>
</dbReference>
<dbReference type="KEGG" id="rso:RSc2623"/>
<dbReference type="eggNOG" id="COG0150">
    <property type="taxonomic scope" value="Bacteria"/>
</dbReference>
<dbReference type="HOGENOM" id="CLU_047116_0_0_4"/>
<dbReference type="UniPathway" id="UPA00074">
    <property type="reaction ID" value="UER00129"/>
</dbReference>
<dbReference type="Proteomes" id="UP000001436">
    <property type="component" value="Chromosome"/>
</dbReference>
<dbReference type="GO" id="GO:0005829">
    <property type="term" value="C:cytosol"/>
    <property type="evidence" value="ECO:0007669"/>
    <property type="project" value="TreeGrafter"/>
</dbReference>
<dbReference type="GO" id="GO:0005524">
    <property type="term" value="F:ATP binding"/>
    <property type="evidence" value="ECO:0007669"/>
    <property type="project" value="UniProtKB-KW"/>
</dbReference>
<dbReference type="GO" id="GO:0004637">
    <property type="term" value="F:phosphoribosylamine-glycine ligase activity"/>
    <property type="evidence" value="ECO:0007669"/>
    <property type="project" value="TreeGrafter"/>
</dbReference>
<dbReference type="GO" id="GO:0004641">
    <property type="term" value="F:phosphoribosylformylglycinamidine cyclo-ligase activity"/>
    <property type="evidence" value="ECO:0007669"/>
    <property type="project" value="UniProtKB-UniRule"/>
</dbReference>
<dbReference type="GO" id="GO:0006189">
    <property type="term" value="P:'de novo' IMP biosynthetic process"/>
    <property type="evidence" value="ECO:0007669"/>
    <property type="project" value="UniProtKB-UniRule"/>
</dbReference>
<dbReference type="GO" id="GO:0046084">
    <property type="term" value="P:adenine biosynthetic process"/>
    <property type="evidence" value="ECO:0007669"/>
    <property type="project" value="TreeGrafter"/>
</dbReference>
<dbReference type="CDD" id="cd02196">
    <property type="entry name" value="PurM"/>
    <property type="match status" value="1"/>
</dbReference>
<dbReference type="FunFam" id="3.30.1330.10:FF:000001">
    <property type="entry name" value="Phosphoribosylformylglycinamidine cyclo-ligase"/>
    <property type="match status" value="1"/>
</dbReference>
<dbReference type="FunFam" id="3.90.650.10:FF:000001">
    <property type="entry name" value="Phosphoribosylformylglycinamidine cyclo-ligase"/>
    <property type="match status" value="1"/>
</dbReference>
<dbReference type="Gene3D" id="3.90.650.10">
    <property type="entry name" value="PurM-like C-terminal domain"/>
    <property type="match status" value="1"/>
</dbReference>
<dbReference type="Gene3D" id="3.30.1330.10">
    <property type="entry name" value="PurM-like, N-terminal domain"/>
    <property type="match status" value="1"/>
</dbReference>
<dbReference type="HAMAP" id="MF_00741">
    <property type="entry name" value="AIRS"/>
    <property type="match status" value="1"/>
</dbReference>
<dbReference type="InterPro" id="IPR010918">
    <property type="entry name" value="PurM-like_C_dom"/>
</dbReference>
<dbReference type="InterPro" id="IPR036676">
    <property type="entry name" value="PurM-like_C_sf"/>
</dbReference>
<dbReference type="InterPro" id="IPR016188">
    <property type="entry name" value="PurM-like_N"/>
</dbReference>
<dbReference type="InterPro" id="IPR036921">
    <property type="entry name" value="PurM-like_N_sf"/>
</dbReference>
<dbReference type="InterPro" id="IPR004733">
    <property type="entry name" value="PurM_cligase"/>
</dbReference>
<dbReference type="NCBIfam" id="TIGR00878">
    <property type="entry name" value="purM"/>
    <property type="match status" value="1"/>
</dbReference>
<dbReference type="PANTHER" id="PTHR10520:SF12">
    <property type="entry name" value="TRIFUNCTIONAL PURINE BIOSYNTHETIC PROTEIN ADENOSINE-3"/>
    <property type="match status" value="1"/>
</dbReference>
<dbReference type="PANTHER" id="PTHR10520">
    <property type="entry name" value="TRIFUNCTIONAL PURINE BIOSYNTHETIC PROTEIN ADENOSINE-3-RELATED"/>
    <property type="match status" value="1"/>
</dbReference>
<dbReference type="Pfam" id="PF00586">
    <property type="entry name" value="AIRS"/>
    <property type="match status" value="1"/>
</dbReference>
<dbReference type="Pfam" id="PF02769">
    <property type="entry name" value="AIRS_C"/>
    <property type="match status" value="1"/>
</dbReference>
<dbReference type="SUPFAM" id="SSF56042">
    <property type="entry name" value="PurM C-terminal domain-like"/>
    <property type="match status" value="1"/>
</dbReference>
<dbReference type="SUPFAM" id="SSF55326">
    <property type="entry name" value="PurM N-terminal domain-like"/>
    <property type="match status" value="1"/>
</dbReference>
<name>PUR5_RALN1</name>
<feature type="chain" id="PRO_0000148236" description="Phosphoribosylformylglycinamidine cyclo-ligase">
    <location>
        <begin position="1"/>
        <end position="353"/>
    </location>
</feature>
<organism>
    <name type="scientific">Ralstonia nicotianae (strain ATCC BAA-1114 / GMI1000)</name>
    <name type="common">Ralstonia solanacearum</name>
    <dbReference type="NCBI Taxonomy" id="267608"/>
    <lineage>
        <taxon>Bacteria</taxon>
        <taxon>Pseudomonadati</taxon>
        <taxon>Pseudomonadota</taxon>
        <taxon>Betaproteobacteria</taxon>
        <taxon>Burkholderiales</taxon>
        <taxon>Burkholderiaceae</taxon>
        <taxon>Ralstonia</taxon>
        <taxon>Ralstonia solanacearum species complex</taxon>
    </lineage>
</organism>
<sequence length="353" mass="37152">MSASETPSASASRGLSYRDAGVDIEAGDALVDRIKPFAKRTLREGVLGGIGGFGALFEISKKYQEPVLVSGTDGVGTKLKLAFALNRHDTVGQDLVAMSVNDILVQGAEPLFFLDYFACGKLDVDTAATVIKGIAQGCELAGCALIGGETAEMPSMYPAGEYDLAGFAVGAVEKRKIIDGTTIACGDVVLGLASSGAHSNGYSLVRKIIEVSRPDLNADFHGQRLQDAIMAPTRIYVKPLLALIDKLPVKGMAHITGGGLVENVPRVLPEGVTAVLHQDAWTLPPLFQWLQKAGNVADDEMHRVFNCGIGMIVIVSAADAPAAIAHLKDAGETVYQIGEIRARQPGEAQTIVI</sequence>
<reference key="1">
    <citation type="journal article" date="2002" name="Nature">
        <title>Genome sequence of the plant pathogen Ralstonia solanacearum.</title>
        <authorList>
            <person name="Salanoubat M."/>
            <person name="Genin S."/>
            <person name="Artiguenave F."/>
            <person name="Gouzy J."/>
            <person name="Mangenot S."/>
            <person name="Arlat M."/>
            <person name="Billault A."/>
            <person name="Brottier P."/>
            <person name="Camus J.-C."/>
            <person name="Cattolico L."/>
            <person name="Chandler M."/>
            <person name="Choisne N."/>
            <person name="Claudel-Renard C."/>
            <person name="Cunnac S."/>
            <person name="Demange N."/>
            <person name="Gaspin C."/>
            <person name="Lavie M."/>
            <person name="Moisan A."/>
            <person name="Robert C."/>
            <person name="Saurin W."/>
            <person name="Schiex T."/>
            <person name="Siguier P."/>
            <person name="Thebault P."/>
            <person name="Whalen M."/>
            <person name="Wincker P."/>
            <person name="Levy M."/>
            <person name="Weissenbach J."/>
            <person name="Boucher C.A."/>
        </authorList>
    </citation>
    <scope>NUCLEOTIDE SEQUENCE [LARGE SCALE GENOMIC DNA]</scope>
    <source>
        <strain>ATCC BAA-1114 / GMI1000</strain>
    </source>
</reference>
<proteinExistence type="inferred from homology"/>
<evidence type="ECO:0000255" key="1">
    <source>
        <dbReference type="HAMAP-Rule" id="MF_00741"/>
    </source>
</evidence>
<gene>
    <name evidence="1" type="primary">purM</name>
    <name type="ordered locus">RSc2623</name>
    <name type="ORF">RS00927</name>
</gene>
<accession>Q8XW52</accession>